<reference key="1">
    <citation type="journal article" date="2017" name="Nat. Microbiol.">
        <title>Global analysis of biosynthetic gene clusters reveals vast potential of secondary metabolite production in Penicillium species.</title>
        <authorList>
            <person name="Nielsen J.C."/>
            <person name="Grijseels S."/>
            <person name="Prigent S."/>
            <person name="Ji B."/>
            <person name="Dainat J."/>
            <person name="Nielsen K.F."/>
            <person name="Frisvad J.C."/>
            <person name="Workman M."/>
            <person name="Nielsen J."/>
        </authorList>
    </citation>
    <scope>NUCLEOTIDE SEQUENCE [LARGE SCALE GENOMIC DNA]</scope>
    <source>
        <strain>IBT 4502</strain>
    </source>
</reference>
<reference key="2">
    <citation type="journal article" date="2021" name="Front. Microbiol.">
        <title>CRISPR-Cas9-Based Discovery of the Verrucosidin Biosynthesis Gene Cluster in Penicillium polonicum.</title>
        <authorList>
            <person name="Valente S."/>
            <person name="Piombo E."/>
            <person name="Schroeckh V."/>
            <person name="Meloni G.R."/>
            <person name="Heinekamp T."/>
            <person name="Brakhage A.A."/>
            <person name="Spadaro D."/>
        </authorList>
    </citation>
    <scope>FUNCTION</scope>
</reference>
<name>VERH_PENPO</name>
<proteinExistence type="inferred from homology"/>
<protein>
    <recommendedName>
        <fullName evidence="4">Cytochrome P450 monooxygenase verH</fullName>
        <ecNumber evidence="6">1.-.-.-</ecNumber>
    </recommendedName>
    <alternativeName>
        <fullName evidence="4">Cluster 4 protein H</fullName>
    </alternativeName>
    <alternativeName>
        <fullName evidence="4">Verrucosidin biosynthesis cluster protein H</fullName>
    </alternativeName>
</protein>
<feature type="chain" id="PRO_0000455355" description="Cytochrome P450 monooxygenase verH">
    <location>
        <begin position="1"/>
        <end position="538"/>
    </location>
</feature>
<feature type="transmembrane region" description="Helical" evidence="2">
    <location>
        <begin position="2"/>
        <end position="21"/>
    </location>
</feature>
<feature type="binding site" description="axial binding residue" evidence="1">
    <location>
        <position position="445"/>
    </location>
    <ligand>
        <name>heme</name>
        <dbReference type="ChEBI" id="CHEBI:30413"/>
    </ligand>
    <ligandPart>
        <name>Fe</name>
        <dbReference type="ChEBI" id="CHEBI:18248"/>
    </ligandPart>
</feature>
<sequence>MVFAMLVVCWSIFLGLWMLVSRLKQSRDKICPPKGPPRLPWIGNLHQFPLKLLHLRLTEWSRTYGGFYTLKLGPVTAAVITDRQIAKEAFDRNSAISSTRHTNYATEFVTDGTHLLTMKYGALWREERKILQQTLKGSVCDNDHMRLIDAEQTQLMRDLLVNPSDYSAYIKRASTSIITSLVFGIRTPSCATLHLQELDAINDDWLQLLVIGGALSEDVFPVLKYIPSAFLGTFTKRLKGIRRRMRRLYGTMLNQTITRQRESPAPPARSMIDAVLNQREHFNLTDRQIEVLAGVTLEGGFDTTTSMLLVFVQAMTLHPECQERAYVEINALCGRHRIPQWSDRNQLPYVNMLLKETMRWRPVTTLSPPHVLEKDTTIRGTFLPQGSMLILNTWGLHQDPNVFIDPDRFDPMRYEGYTKLAADYANAPDAATRDHYTYGIGRRICPGIHLADRSMFLAIAKLIWGFRFEPQRDEQGNSIPIDSNPVTGYTVDKVQISPKPFACAVIPRDKEGEKTILREFGVASEVFADYNLDENASL</sequence>
<accession>A0A1V6NWJ0</accession>
<dbReference type="EC" id="1.-.-.-" evidence="6"/>
<dbReference type="EMBL" id="MDYM01000002">
    <property type="protein sequence ID" value="OQD69071.1"/>
    <property type="molecule type" value="Genomic_DNA"/>
</dbReference>
<dbReference type="SMR" id="A0A1V6NWJ0"/>
<dbReference type="STRING" id="60169.A0A1V6NWJ0"/>
<dbReference type="OrthoDB" id="78260at5073"/>
<dbReference type="UniPathway" id="UPA00213"/>
<dbReference type="Proteomes" id="UP000191408">
    <property type="component" value="Unassembled WGS sequence"/>
</dbReference>
<dbReference type="GO" id="GO:0016020">
    <property type="term" value="C:membrane"/>
    <property type="evidence" value="ECO:0007669"/>
    <property type="project" value="UniProtKB-SubCell"/>
</dbReference>
<dbReference type="GO" id="GO:0020037">
    <property type="term" value="F:heme binding"/>
    <property type="evidence" value="ECO:0007669"/>
    <property type="project" value="InterPro"/>
</dbReference>
<dbReference type="GO" id="GO:0005506">
    <property type="term" value="F:iron ion binding"/>
    <property type="evidence" value="ECO:0007669"/>
    <property type="project" value="InterPro"/>
</dbReference>
<dbReference type="GO" id="GO:0004497">
    <property type="term" value="F:monooxygenase activity"/>
    <property type="evidence" value="ECO:0007669"/>
    <property type="project" value="UniProtKB-KW"/>
</dbReference>
<dbReference type="GO" id="GO:0016705">
    <property type="term" value="F:oxidoreductase activity, acting on paired donors, with incorporation or reduction of molecular oxygen"/>
    <property type="evidence" value="ECO:0007669"/>
    <property type="project" value="InterPro"/>
</dbReference>
<dbReference type="GO" id="GO:0043386">
    <property type="term" value="P:mycotoxin biosynthetic process"/>
    <property type="evidence" value="ECO:0007669"/>
    <property type="project" value="UniProtKB-ARBA"/>
</dbReference>
<dbReference type="GO" id="GO:0016114">
    <property type="term" value="P:terpenoid biosynthetic process"/>
    <property type="evidence" value="ECO:0007669"/>
    <property type="project" value="UniProtKB-UniPathway"/>
</dbReference>
<dbReference type="CDD" id="cd11065">
    <property type="entry name" value="CYP64-like"/>
    <property type="match status" value="1"/>
</dbReference>
<dbReference type="Gene3D" id="1.10.630.10">
    <property type="entry name" value="Cytochrome P450"/>
    <property type="match status" value="1"/>
</dbReference>
<dbReference type="InterPro" id="IPR001128">
    <property type="entry name" value="Cyt_P450"/>
</dbReference>
<dbReference type="InterPro" id="IPR002401">
    <property type="entry name" value="Cyt_P450_E_grp-I"/>
</dbReference>
<dbReference type="InterPro" id="IPR036396">
    <property type="entry name" value="Cyt_P450_sf"/>
</dbReference>
<dbReference type="InterPro" id="IPR050364">
    <property type="entry name" value="Cytochrome_P450_fung"/>
</dbReference>
<dbReference type="PANTHER" id="PTHR46300:SF2">
    <property type="entry name" value="CYTOCHROME P450 MONOOXYGENASE ALNH-RELATED"/>
    <property type="match status" value="1"/>
</dbReference>
<dbReference type="PANTHER" id="PTHR46300">
    <property type="entry name" value="P450, PUTATIVE (EUROFUNG)-RELATED-RELATED"/>
    <property type="match status" value="1"/>
</dbReference>
<dbReference type="Pfam" id="PF00067">
    <property type="entry name" value="p450"/>
    <property type="match status" value="1"/>
</dbReference>
<dbReference type="PRINTS" id="PR00463">
    <property type="entry name" value="EP450I"/>
</dbReference>
<dbReference type="SUPFAM" id="SSF48264">
    <property type="entry name" value="Cytochrome P450"/>
    <property type="match status" value="1"/>
</dbReference>
<gene>
    <name evidence="4" type="primary">verH</name>
    <name evidence="4" type="synonym">cl4H</name>
    <name type="ORF">PENPOL_c002G07307</name>
</gene>
<organism>
    <name type="scientific">Penicillium polonicum</name>
    <dbReference type="NCBI Taxonomy" id="60169"/>
    <lineage>
        <taxon>Eukaryota</taxon>
        <taxon>Fungi</taxon>
        <taxon>Dikarya</taxon>
        <taxon>Ascomycota</taxon>
        <taxon>Pezizomycotina</taxon>
        <taxon>Eurotiomycetes</taxon>
        <taxon>Eurotiomycetidae</taxon>
        <taxon>Eurotiales</taxon>
        <taxon>Aspergillaceae</taxon>
        <taxon>Penicillium</taxon>
    </lineage>
</organism>
<keyword id="KW-0349">Heme</keyword>
<keyword id="KW-0408">Iron</keyword>
<keyword id="KW-0472">Membrane</keyword>
<keyword id="KW-0479">Metal-binding</keyword>
<keyword id="KW-0503">Monooxygenase</keyword>
<keyword id="KW-0560">Oxidoreductase</keyword>
<keyword id="KW-1185">Reference proteome</keyword>
<keyword id="KW-0812">Transmembrane</keyword>
<keyword id="KW-1133">Transmembrane helix</keyword>
<evidence type="ECO:0000250" key="1">
    <source>
        <dbReference type="UniProtKB" id="P04798"/>
    </source>
</evidence>
<evidence type="ECO:0000255" key="2"/>
<evidence type="ECO:0000269" key="3">
    <source>
    </source>
</evidence>
<evidence type="ECO:0000303" key="4">
    <source>
    </source>
</evidence>
<evidence type="ECO:0000305" key="5"/>
<evidence type="ECO:0000305" key="6">
    <source>
    </source>
</evidence>
<comment type="function">
    <text evidence="3 6">Cytochrome P450 monooxygenase; part of the gene cluster that mediates the biosynthesis of the neurotoxin verrucosidin, a methylated alpha-pyrone polyketide that inhibits oxidative phosphorylation in mitochondria and thereby causes neurological diseases (PubMed:34093475). The carbon backbone of verrucosidin is synthesized by the HR-PKS verA, and further modified by the other verrucodidin cluster enzymes (Probable).</text>
</comment>
<comment type="cofactor">
    <cofactor evidence="1">
        <name>heme</name>
        <dbReference type="ChEBI" id="CHEBI:30413"/>
    </cofactor>
</comment>
<comment type="pathway">
    <text evidence="6">Secondary metabolite biosynthesis; terpenoid biosynthesis.</text>
</comment>
<comment type="pathway">
    <text evidence="6">Mycotoxin biosynthesis.</text>
</comment>
<comment type="subcellular location">
    <subcellularLocation>
        <location evidence="2">Membrane</location>
        <topology evidence="2">Single-pass membrane protein</topology>
    </subcellularLocation>
</comment>
<comment type="similarity">
    <text evidence="5">Belongs to the cytochrome P450 family.</text>
</comment>